<organism>
    <name type="scientific">Lemna minor</name>
    <name type="common">Common duckweed</name>
    <dbReference type="NCBI Taxonomy" id="4472"/>
    <lineage>
        <taxon>Eukaryota</taxon>
        <taxon>Viridiplantae</taxon>
        <taxon>Streptophyta</taxon>
        <taxon>Embryophyta</taxon>
        <taxon>Tracheophyta</taxon>
        <taxon>Spermatophyta</taxon>
        <taxon>Magnoliopsida</taxon>
        <taxon>Liliopsida</taxon>
        <taxon>Araceae</taxon>
        <taxon>Lemnoideae</taxon>
        <taxon>Lemna</taxon>
    </lineage>
</organism>
<feature type="chain" id="PRO_0000360339" description="NAD(P)H-quinone oxidoreductase subunit 4L, chloroplastic">
    <location>
        <begin position="1"/>
        <end position="101"/>
    </location>
</feature>
<feature type="transmembrane region" description="Helical" evidence="1">
    <location>
        <begin position="2"/>
        <end position="22"/>
    </location>
</feature>
<feature type="transmembrane region" description="Helical" evidence="1">
    <location>
        <begin position="32"/>
        <end position="52"/>
    </location>
</feature>
<feature type="transmembrane region" description="Helical" evidence="1">
    <location>
        <begin position="61"/>
        <end position="81"/>
    </location>
</feature>
<dbReference type="EC" id="7.1.1.-" evidence="1"/>
<dbReference type="EMBL" id="DQ400350">
    <property type="protein sequence ID" value="ABD48548.1"/>
    <property type="molecule type" value="Genomic_DNA"/>
</dbReference>
<dbReference type="RefSeq" id="YP_001595561.1">
    <property type="nucleotide sequence ID" value="NC_010109.1"/>
</dbReference>
<dbReference type="SMR" id="A9L9E9"/>
<dbReference type="GeneID" id="5787599"/>
<dbReference type="GO" id="GO:0009535">
    <property type="term" value="C:chloroplast thylakoid membrane"/>
    <property type="evidence" value="ECO:0007669"/>
    <property type="project" value="UniProtKB-SubCell"/>
</dbReference>
<dbReference type="GO" id="GO:0030964">
    <property type="term" value="C:NADH dehydrogenase complex"/>
    <property type="evidence" value="ECO:0007669"/>
    <property type="project" value="TreeGrafter"/>
</dbReference>
<dbReference type="GO" id="GO:0016655">
    <property type="term" value="F:oxidoreductase activity, acting on NAD(P)H, quinone or similar compound as acceptor"/>
    <property type="evidence" value="ECO:0007669"/>
    <property type="project" value="UniProtKB-UniRule"/>
</dbReference>
<dbReference type="GO" id="GO:0048038">
    <property type="term" value="F:quinone binding"/>
    <property type="evidence" value="ECO:0007669"/>
    <property type="project" value="UniProtKB-KW"/>
</dbReference>
<dbReference type="GO" id="GO:0042773">
    <property type="term" value="P:ATP synthesis coupled electron transport"/>
    <property type="evidence" value="ECO:0007669"/>
    <property type="project" value="InterPro"/>
</dbReference>
<dbReference type="GO" id="GO:0019684">
    <property type="term" value="P:photosynthesis, light reaction"/>
    <property type="evidence" value="ECO:0007669"/>
    <property type="project" value="UniProtKB-UniRule"/>
</dbReference>
<dbReference type="FunFam" id="1.10.287.3510:FF:000001">
    <property type="entry name" value="NADH-quinone oxidoreductase subunit K"/>
    <property type="match status" value="1"/>
</dbReference>
<dbReference type="Gene3D" id="1.10.287.3510">
    <property type="match status" value="1"/>
</dbReference>
<dbReference type="HAMAP" id="MF_01456">
    <property type="entry name" value="NDH1_NuoK"/>
    <property type="match status" value="1"/>
</dbReference>
<dbReference type="InterPro" id="IPR001133">
    <property type="entry name" value="NADH_UbQ_OxRdtase_chain4L/K"/>
</dbReference>
<dbReference type="InterPro" id="IPR039428">
    <property type="entry name" value="NUOK/Mnh_C1-like"/>
</dbReference>
<dbReference type="NCBIfam" id="NF004320">
    <property type="entry name" value="PRK05715.1-2"/>
    <property type="match status" value="1"/>
</dbReference>
<dbReference type="NCBIfam" id="NF004322">
    <property type="entry name" value="PRK05715.1-4"/>
    <property type="match status" value="1"/>
</dbReference>
<dbReference type="PANTHER" id="PTHR11434:SF16">
    <property type="entry name" value="NADH-UBIQUINONE OXIDOREDUCTASE CHAIN 4L"/>
    <property type="match status" value="1"/>
</dbReference>
<dbReference type="PANTHER" id="PTHR11434">
    <property type="entry name" value="NADH-UBIQUINONE OXIDOREDUCTASE SUBUNIT ND4L"/>
    <property type="match status" value="1"/>
</dbReference>
<dbReference type="Pfam" id="PF00420">
    <property type="entry name" value="Oxidored_q2"/>
    <property type="match status" value="1"/>
</dbReference>
<keyword id="KW-0150">Chloroplast</keyword>
<keyword id="KW-0472">Membrane</keyword>
<keyword id="KW-0520">NAD</keyword>
<keyword id="KW-0521">NADP</keyword>
<keyword id="KW-0934">Plastid</keyword>
<keyword id="KW-0618">Plastoquinone</keyword>
<keyword id="KW-0874">Quinone</keyword>
<keyword id="KW-0793">Thylakoid</keyword>
<keyword id="KW-1278">Translocase</keyword>
<keyword id="KW-0812">Transmembrane</keyword>
<keyword id="KW-1133">Transmembrane helix</keyword>
<keyword id="KW-0813">Transport</keyword>
<accession>A9L9E9</accession>
<geneLocation type="chloroplast"/>
<gene>
    <name evidence="1" type="primary">ndhE</name>
</gene>
<proteinExistence type="inferred from homology"/>
<sequence length="101" mass="11290">MMFEHVLFLSAYLFSIGIYGLITSRSMVRALMCLELILNSVNINLVTFSDLFDSRQLKGDIFSIFVIAIAAAEAAIGLAIVSSIYRNRKSIRINQSNLLNK</sequence>
<comment type="function">
    <text evidence="1">NDH shuttles electrons from NAD(P)H:plastoquinone, via FMN and iron-sulfur (Fe-S) centers, to quinones in the photosynthetic chain and possibly in a chloroplast respiratory chain. The immediate electron acceptor for the enzyme in this species is believed to be plastoquinone. Couples the redox reaction to proton translocation, and thus conserves the redox energy in a proton gradient.</text>
</comment>
<comment type="catalytic activity">
    <reaction evidence="1">
        <text>a plastoquinone + NADH + (n+1) H(+)(in) = a plastoquinol + NAD(+) + n H(+)(out)</text>
        <dbReference type="Rhea" id="RHEA:42608"/>
        <dbReference type="Rhea" id="RHEA-COMP:9561"/>
        <dbReference type="Rhea" id="RHEA-COMP:9562"/>
        <dbReference type="ChEBI" id="CHEBI:15378"/>
        <dbReference type="ChEBI" id="CHEBI:17757"/>
        <dbReference type="ChEBI" id="CHEBI:57540"/>
        <dbReference type="ChEBI" id="CHEBI:57945"/>
        <dbReference type="ChEBI" id="CHEBI:62192"/>
    </reaction>
</comment>
<comment type="catalytic activity">
    <reaction evidence="1">
        <text>a plastoquinone + NADPH + (n+1) H(+)(in) = a plastoquinol + NADP(+) + n H(+)(out)</text>
        <dbReference type="Rhea" id="RHEA:42612"/>
        <dbReference type="Rhea" id="RHEA-COMP:9561"/>
        <dbReference type="Rhea" id="RHEA-COMP:9562"/>
        <dbReference type="ChEBI" id="CHEBI:15378"/>
        <dbReference type="ChEBI" id="CHEBI:17757"/>
        <dbReference type="ChEBI" id="CHEBI:57783"/>
        <dbReference type="ChEBI" id="CHEBI:58349"/>
        <dbReference type="ChEBI" id="CHEBI:62192"/>
    </reaction>
</comment>
<comment type="subunit">
    <text evidence="1">NDH is composed of at least 16 different subunits, 5 of which are encoded in the nucleus.</text>
</comment>
<comment type="subcellular location">
    <subcellularLocation>
        <location evidence="1">Plastid</location>
        <location evidence="1">Chloroplast thylakoid membrane</location>
        <topology evidence="1">Multi-pass membrane protein</topology>
    </subcellularLocation>
</comment>
<comment type="similarity">
    <text evidence="1">Belongs to the complex I subunit 4L family.</text>
</comment>
<protein>
    <recommendedName>
        <fullName evidence="1">NAD(P)H-quinone oxidoreductase subunit 4L, chloroplastic</fullName>
        <ecNumber evidence="1">7.1.1.-</ecNumber>
    </recommendedName>
    <alternativeName>
        <fullName evidence="1">NAD(P)H dehydrogenase subunit 4L</fullName>
    </alternativeName>
    <alternativeName>
        <fullName evidence="1">NADH-plastoquinone oxidoreductase subunit 4L</fullName>
    </alternativeName>
</protein>
<evidence type="ECO:0000255" key="1">
    <source>
        <dbReference type="HAMAP-Rule" id="MF_01456"/>
    </source>
</evidence>
<name>NU4LC_LEMMI</name>
<reference key="1">
    <citation type="journal article" date="2008" name="J. Mol. Evol.">
        <title>Complete sequence of the Duckweed (Lemna minor) chloroplast genome: structural organization and phylogenetic relationships to other angiosperms.</title>
        <authorList>
            <person name="Mardanov A.V."/>
            <person name="Ravin N.V."/>
            <person name="Kuznetsov B.B."/>
            <person name="Samigullin T.H."/>
            <person name="Antonov A.S."/>
            <person name="Kolganova T.V."/>
            <person name="Skyabin K.G."/>
        </authorList>
    </citation>
    <scope>NUCLEOTIDE SEQUENCE [LARGE SCALE GENOMIC DNA]</scope>
</reference>